<proteinExistence type="inferred from homology"/>
<evidence type="ECO:0000255" key="1">
    <source>
        <dbReference type="HAMAP-Rule" id="MF_00141"/>
    </source>
</evidence>
<sequence>MISVNDFKTGVTIELEGQAFQVVEFMHVKPGKGSAFVRAKLKNVKTGGTVEKTFRGGEKVPRAHLDKREMQYLYNDGEGYVCMDTENYEQISISKESIGEGAKWLMENMILGVLFFQGNIIGVDLPNFVEMLVVDTEPGVKGDTATGAVKNATLESGAVVQVPLFVNTGDRLRIDIRTGEYMERV</sequence>
<gene>
    <name evidence="1" type="primary">efp</name>
    <name type="ordered locus">Swol_0546</name>
</gene>
<feature type="chain" id="PRO_1000010889" description="Elongation factor P">
    <location>
        <begin position="1"/>
        <end position="185"/>
    </location>
</feature>
<dbReference type="EMBL" id="CP000448">
    <property type="protein sequence ID" value="ABI67880.1"/>
    <property type="molecule type" value="Genomic_DNA"/>
</dbReference>
<dbReference type="RefSeq" id="WP_011639985.1">
    <property type="nucleotide sequence ID" value="NC_008346.1"/>
</dbReference>
<dbReference type="SMR" id="Q0AZH4"/>
<dbReference type="STRING" id="335541.Swol_0546"/>
<dbReference type="KEGG" id="swo:Swol_0546"/>
<dbReference type="eggNOG" id="COG0231">
    <property type="taxonomic scope" value="Bacteria"/>
</dbReference>
<dbReference type="HOGENOM" id="CLU_074944_0_1_9"/>
<dbReference type="OrthoDB" id="9801844at2"/>
<dbReference type="UniPathway" id="UPA00345"/>
<dbReference type="Proteomes" id="UP000001968">
    <property type="component" value="Chromosome"/>
</dbReference>
<dbReference type="GO" id="GO:0005737">
    <property type="term" value="C:cytoplasm"/>
    <property type="evidence" value="ECO:0007669"/>
    <property type="project" value="UniProtKB-SubCell"/>
</dbReference>
<dbReference type="GO" id="GO:0003746">
    <property type="term" value="F:translation elongation factor activity"/>
    <property type="evidence" value="ECO:0007669"/>
    <property type="project" value="UniProtKB-UniRule"/>
</dbReference>
<dbReference type="GO" id="GO:0043043">
    <property type="term" value="P:peptide biosynthetic process"/>
    <property type="evidence" value="ECO:0007669"/>
    <property type="project" value="InterPro"/>
</dbReference>
<dbReference type="CDD" id="cd04470">
    <property type="entry name" value="S1_EF-P_repeat_1"/>
    <property type="match status" value="1"/>
</dbReference>
<dbReference type="CDD" id="cd05794">
    <property type="entry name" value="S1_EF-P_repeat_2"/>
    <property type="match status" value="1"/>
</dbReference>
<dbReference type="FunFam" id="2.30.30.30:FF:000003">
    <property type="entry name" value="Elongation factor P"/>
    <property type="match status" value="1"/>
</dbReference>
<dbReference type="FunFam" id="2.40.50.140:FF:000004">
    <property type="entry name" value="Elongation factor P"/>
    <property type="match status" value="1"/>
</dbReference>
<dbReference type="FunFam" id="2.40.50.140:FF:000009">
    <property type="entry name" value="Elongation factor P"/>
    <property type="match status" value="1"/>
</dbReference>
<dbReference type="Gene3D" id="2.30.30.30">
    <property type="match status" value="1"/>
</dbReference>
<dbReference type="Gene3D" id="2.40.50.140">
    <property type="entry name" value="Nucleic acid-binding proteins"/>
    <property type="match status" value="2"/>
</dbReference>
<dbReference type="HAMAP" id="MF_00141">
    <property type="entry name" value="EF_P"/>
    <property type="match status" value="1"/>
</dbReference>
<dbReference type="InterPro" id="IPR015365">
    <property type="entry name" value="Elong-fact-P_C"/>
</dbReference>
<dbReference type="InterPro" id="IPR012340">
    <property type="entry name" value="NA-bd_OB-fold"/>
</dbReference>
<dbReference type="InterPro" id="IPR014722">
    <property type="entry name" value="Rib_uL2_dom2"/>
</dbReference>
<dbReference type="InterPro" id="IPR020599">
    <property type="entry name" value="Transl_elong_fac_P/YeiP"/>
</dbReference>
<dbReference type="InterPro" id="IPR013185">
    <property type="entry name" value="Transl_elong_KOW-like"/>
</dbReference>
<dbReference type="InterPro" id="IPR001059">
    <property type="entry name" value="Transl_elong_P/YeiP_cen"/>
</dbReference>
<dbReference type="InterPro" id="IPR013852">
    <property type="entry name" value="Transl_elong_P/YeiP_CS"/>
</dbReference>
<dbReference type="InterPro" id="IPR011768">
    <property type="entry name" value="Transl_elongation_fac_P"/>
</dbReference>
<dbReference type="InterPro" id="IPR008991">
    <property type="entry name" value="Translation_prot_SH3-like_sf"/>
</dbReference>
<dbReference type="NCBIfam" id="TIGR00038">
    <property type="entry name" value="efp"/>
    <property type="match status" value="1"/>
</dbReference>
<dbReference type="NCBIfam" id="NF001810">
    <property type="entry name" value="PRK00529.1"/>
    <property type="match status" value="1"/>
</dbReference>
<dbReference type="PANTHER" id="PTHR30053">
    <property type="entry name" value="ELONGATION FACTOR P"/>
    <property type="match status" value="1"/>
</dbReference>
<dbReference type="PANTHER" id="PTHR30053:SF12">
    <property type="entry name" value="ELONGATION FACTOR P (EF-P) FAMILY PROTEIN"/>
    <property type="match status" value="1"/>
</dbReference>
<dbReference type="Pfam" id="PF01132">
    <property type="entry name" value="EFP"/>
    <property type="match status" value="1"/>
</dbReference>
<dbReference type="Pfam" id="PF08207">
    <property type="entry name" value="EFP_N"/>
    <property type="match status" value="1"/>
</dbReference>
<dbReference type="Pfam" id="PF09285">
    <property type="entry name" value="Elong-fact-P_C"/>
    <property type="match status" value="1"/>
</dbReference>
<dbReference type="PIRSF" id="PIRSF005901">
    <property type="entry name" value="EF-P"/>
    <property type="match status" value="1"/>
</dbReference>
<dbReference type="SMART" id="SM01185">
    <property type="entry name" value="EFP"/>
    <property type="match status" value="1"/>
</dbReference>
<dbReference type="SMART" id="SM00841">
    <property type="entry name" value="Elong-fact-P_C"/>
    <property type="match status" value="1"/>
</dbReference>
<dbReference type="SUPFAM" id="SSF50249">
    <property type="entry name" value="Nucleic acid-binding proteins"/>
    <property type="match status" value="2"/>
</dbReference>
<dbReference type="SUPFAM" id="SSF50104">
    <property type="entry name" value="Translation proteins SH3-like domain"/>
    <property type="match status" value="1"/>
</dbReference>
<dbReference type="PROSITE" id="PS01275">
    <property type="entry name" value="EFP"/>
    <property type="match status" value="1"/>
</dbReference>
<name>EFP_SYNWW</name>
<organism>
    <name type="scientific">Syntrophomonas wolfei subsp. wolfei (strain DSM 2245B / Goettingen)</name>
    <dbReference type="NCBI Taxonomy" id="335541"/>
    <lineage>
        <taxon>Bacteria</taxon>
        <taxon>Bacillati</taxon>
        <taxon>Bacillota</taxon>
        <taxon>Clostridia</taxon>
        <taxon>Eubacteriales</taxon>
        <taxon>Syntrophomonadaceae</taxon>
        <taxon>Syntrophomonas</taxon>
    </lineage>
</organism>
<reference key="1">
    <citation type="journal article" date="2010" name="Environ. Microbiol.">
        <title>The genome of Syntrophomonas wolfei: new insights into syntrophic metabolism and biohydrogen production.</title>
        <authorList>
            <person name="Sieber J.R."/>
            <person name="Sims D.R."/>
            <person name="Han C."/>
            <person name="Kim E."/>
            <person name="Lykidis A."/>
            <person name="Lapidus A.L."/>
            <person name="McDonnald E."/>
            <person name="Rohlin L."/>
            <person name="Culley D.E."/>
            <person name="Gunsalus R."/>
            <person name="McInerney M.J."/>
        </authorList>
    </citation>
    <scope>NUCLEOTIDE SEQUENCE [LARGE SCALE GENOMIC DNA]</scope>
    <source>
        <strain>DSM 2245B / Goettingen</strain>
    </source>
</reference>
<comment type="function">
    <text evidence="1">Involved in peptide bond synthesis. Stimulates efficient translation and peptide-bond synthesis on native or reconstituted 70S ribosomes in vitro. Probably functions indirectly by altering the affinity of the ribosome for aminoacyl-tRNA, thus increasing their reactivity as acceptors for peptidyl transferase.</text>
</comment>
<comment type="pathway">
    <text evidence="1">Protein biosynthesis; polypeptide chain elongation.</text>
</comment>
<comment type="subcellular location">
    <subcellularLocation>
        <location evidence="1">Cytoplasm</location>
    </subcellularLocation>
</comment>
<comment type="similarity">
    <text evidence="1">Belongs to the elongation factor P family.</text>
</comment>
<protein>
    <recommendedName>
        <fullName evidence="1">Elongation factor P</fullName>
        <shortName evidence="1">EF-P</shortName>
    </recommendedName>
</protein>
<keyword id="KW-0963">Cytoplasm</keyword>
<keyword id="KW-0251">Elongation factor</keyword>
<keyword id="KW-0648">Protein biosynthesis</keyword>
<keyword id="KW-1185">Reference proteome</keyword>
<accession>Q0AZH4</accession>